<reference key="1">
    <citation type="journal article" date="1993" name="J. Bacteriol.">
        <title>Sequence of a class E tetracycline resistance gene from Escherichia coli and comparison of related tetracycline efflux proteins.</title>
        <authorList>
            <person name="Allard J.D."/>
            <person name="Bertrand K.P."/>
        </authorList>
    </citation>
    <scope>NUCLEOTIDE SEQUENCE [GENOMIC DNA]</scope>
    <source>
        <strain>SLH 1456A</strain>
    </source>
</reference>
<evidence type="ECO:0000255" key="1"/>
<evidence type="ECO:0000305" key="2"/>
<comment type="function">
    <text>Resistance to tetracycline by an active tetracycline efflux. This is an energy-dependent process that decreases the accumulation of the antibiotic in whole cells. This protein functions as a metal-tetracycline/H(+) antiporter.</text>
</comment>
<comment type="subcellular location">
    <subcellularLocation>
        <location>Cell inner membrane</location>
        <topology>Multi-pass membrane protein</topology>
    </subcellularLocation>
</comment>
<comment type="similarity">
    <text evidence="2">Belongs to the major facilitator superfamily. TCR/Tet family.</text>
</comment>
<organism>
    <name type="scientific">Escherichia coli</name>
    <dbReference type="NCBI Taxonomy" id="562"/>
    <lineage>
        <taxon>Bacteria</taxon>
        <taxon>Pseudomonadati</taxon>
        <taxon>Pseudomonadota</taxon>
        <taxon>Gammaproteobacteria</taxon>
        <taxon>Enterobacterales</taxon>
        <taxon>Enterobacteriaceae</taxon>
        <taxon>Escherichia</taxon>
    </lineage>
</organism>
<keyword id="KW-0046">Antibiotic resistance</keyword>
<keyword id="KW-0050">Antiport</keyword>
<keyword id="KW-0997">Cell inner membrane</keyword>
<keyword id="KW-1003">Cell membrane</keyword>
<keyword id="KW-0375">Hydrogen ion transport</keyword>
<keyword id="KW-0406">Ion transport</keyword>
<keyword id="KW-0472">Membrane</keyword>
<keyword id="KW-0614">Plasmid</keyword>
<keyword id="KW-0812">Transmembrane</keyword>
<keyword id="KW-1133">Transmembrane helix</keyword>
<keyword id="KW-0813">Transport</keyword>
<accession>Q07282</accession>
<name>TCR5_ECOLX</name>
<feature type="chain" id="PRO_0000173396" description="Tetracycline resistance protein, class E">
    <location>
        <begin position="1"/>
        <end position="405"/>
    </location>
</feature>
<feature type="transmembrane region" description="Helical" evidence="1">
    <location>
        <begin position="6"/>
        <end position="27"/>
    </location>
</feature>
<feature type="transmembrane region" description="Helical" evidence="1">
    <location>
        <begin position="42"/>
        <end position="62"/>
    </location>
</feature>
<feature type="transmembrane region" description="Helical" evidence="1">
    <location>
        <begin position="74"/>
        <end position="94"/>
    </location>
</feature>
<feature type="transmembrane region" description="Helical" evidence="1">
    <location>
        <begin position="102"/>
        <end position="122"/>
    </location>
</feature>
<feature type="transmembrane region" description="Helical" evidence="1">
    <location>
        <begin position="131"/>
        <end position="151"/>
    </location>
</feature>
<feature type="transmembrane region" description="Helical" evidence="1">
    <location>
        <begin position="159"/>
        <end position="179"/>
    </location>
</feature>
<feature type="transmembrane region" description="Helical" evidence="1">
    <location>
        <begin position="215"/>
        <end position="235"/>
    </location>
</feature>
<feature type="transmembrane region" description="Helical" evidence="1">
    <location>
        <begin position="245"/>
        <end position="265"/>
    </location>
</feature>
<feature type="transmembrane region" description="Helical" evidence="1">
    <location>
        <begin position="278"/>
        <end position="298"/>
    </location>
</feature>
<feature type="transmembrane region" description="Helical" evidence="1">
    <location>
        <begin position="299"/>
        <end position="319"/>
    </location>
</feature>
<feature type="transmembrane region" description="Helical" evidence="1">
    <location>
        <begin position="337"/>
        <end position="357"/>
    </location>
</feature>
<feature type="transmembrane region" description="Helical" evidence="1">
    <location>
        <begin position="364"/>
        <end position="385"/>
    </location>
</feature>
<sequence>MNRTVMMALVIIFLDAMGIGIIMPVLPALLREFVGKANVAENYGVLLALYAMMQVIFAPLLGRWSDRIGRRPVLLLSLLGATLDYALMATASVVWVLYLGRLIAGITGATGAVAASTIADVTPEESRTHWFGMMGACFGGGMIAGPVIGGFAGQLSVQAPFMFAAAINGLAFLVSLFILHETHNANQVSDELKNETINETTSSIREMISPLSGLLVVFFIIQLIGQIPATLWVLFGEERFAWDGVMVGVSLAVFGLTHALFQGLAAGFIAKHLGERKAIAVGILADGCGLFLLAVITQSWMVWPVLLLLACGGITLPALQGIISVRVGQVAQGQLQGVLTSLTHLTAVIGPLVFAFLYSATRETWNGWVWIIGCGLYVVALIILRFFHPGRVIHPINKSDVQQRI</sequence>
<protein>
    <recommendedName>
        <fullName>Tetracycline resistance protein, class E</fullName>
        <shortName>TetA(E)</shortName>
    </recommendedName>
</protein>
<geneLocation type="plasmid">
    <name>pSL1456</name>
</geneLocation>
<dbReference type="EMBL" id="L06940">
    <property type="protein sequence ID" value="AAA71915.1"/>
    <property type="molecule type" value="Unassigned_DNA"/>
</dbReference>
<dbReference type="PIR" id="A36896">
    <property type="entry name" value="A36896"/>
</dbReference>
<dbReference type="RefSeq" id="WP_063856076.1">
    <property type="nucleotide sequence ID" value="NG_048186.1"/>
</dbReference>
<dbReference type="SMR" id="Q07282"/>
<dbReference type="CARD" id="ARO:3000173">
    <property type="molecule name" value="tet(E)"/>
    <property type="mechanism identifier" value="ARO:0010000"/>
    <property type="mechanism name" value="antibiotic efflux"/>
</dbReference>
<dbReference type="TCDB" id="2.A.1.2.75">
    <property type="family name" value="the major facilitator superfamily (mfs)"/>
</dbReference>
<dbReference type="KEGG" id="ag:AAA71915"/>
<dbReference type="GO" id="GO:0005886">
    <property type="term" value="C:plasma membrane"/>
    <property type="evidence" value="ECO:0007669"/>
    <property type="project" value="UniProtKB-SubCell"/>
</dbReference>
<dbReference type="GO" id="GO:0015297">
    <property type="term" value="F:antiporter activity"/>
    <property type="evidence" value="ECO:0007669"/>
    <property type="project" value="UniProtKB-KW"/>
</dbReference>
<dbReference type="GO" id="GO:1902600">
    <property type="term" value="P:proton transmembrane transport"/>
    <property type="evidence" value="ECO:0007669"/>
    <property type="project" value="UniProtKB-KW"/>
</dbReference>
<dbReference type="GO" id="GO:0046677">
    <property type="term" value="P:response to antibiotic"/>
    <property type="evidence" value="ECO:0007669"/>
    <property type="project" value="UniProtKB-KW"/>
</dbReference>
<dbReference type="CDD" id="cd17388">
    <property type="entry name" value="MFS_TetA"/>
    <property type="match status" value="1"/>
</dbReference>
<dbReference type="Gene3D" id="1.20.1250.20">
    <property type="entry name" value="MFS general substrate transporter like domains"/>
    <property type="match status" value="1"/>
</dbReference>
<dbReference type="InterPro" id="IPR011701">
    <property type="entry name" value="MFS"/>
</dbReference>
<dbReference type="InterPro" id="IPR020846">
    <property type="entry name" value="MFS_dom"/>
</dbReference>
<dbReference type="InterPro" id="IPR036259">
    <property type="entry name" value="MFS_trans_sf"/>
</dbReference>
<dbReference type="InterPro" id="IPR005829">
    <property type="entry name" value="Sugar_transporter_CS"/>
</dbReference>
<dbReference type="InterPro" id="IPR001958">
    <property type="entry name" value="Tet-R_TetA/multi-R_MdtG-like"/>
</dbReference>
<dbReference type="NCBIfam" id="NF012174">
    <property type="entry name" value="tet_MFS_A_B_C_D"/>
    <property type="match status" value="1"/>
</dbReference>
<dbReference type="NCBIfam" id="NF012187">
    <property type="entry name" value="tet_MFS_E"/>
    <property type="match status" value="1"/>
</dbReference>
<dbReference type="PANTHER" id="PTHR23507:SF1">
    <property type="entry name" value="FI18259P1-RELATED"/>
    <property type="match status" value="1"/>
</dbReference>
<dbReference type="PANTHER" id="PTHR23507">
    <property type="entry name" value="ZGC:174356"/>
    <property type="match status" value="1"/>
</dbReference>
<dbReference type="Pfam" id="PF07690">
    <property type="entry name" value="MFS_1"/>
    <property type="match status" value="1"/>
</dbReference>
<dbReference type="PRINTS" id="PR01035">
    <property type="entry name" value="TCRTETA"/>
</dbReference>
<dbReference type="SUPFAM" id="SSF103473">
    <property type="entry name" value="MFS general substrate transporter"/>
    <property type="match status" value="1"/>
</dbReference>
<dbReference type="PROSITE" id="PS50850">
    <property type="entry name" value="MFS"/>
    <property type="match status" value="1"/>
</dbReference>
<dbReference type="PROSITE" id="PS00216">
    <property type="entry name" value="SUGAR_TRANSPORT_1"/>
    <property type="match status" value="1"/>
</dbReference>
<proteinExistence type="inferred from homology"/>
<gene>
    <name type="primary">tetA</name>
</gene>